<protein>
    <recommendedName>
        <fullName evidence="3">NADP-dependent oxidoreductase lnaE</fullName>
        <ecNumber evidence="5">1.-.-.-</ecNumber>
    </recommendedName>
    <alternativeName>
        <fullName evidence="3">Lna diastereomeric piperazines biosynthesis cluster protein E</fullName>
    </alternativeName>
</protein>
<reference key="1">
    <citation type="journal article" date="2015" name="Genome Announc.">
        <title>Genome sequence of Aspergillus flavus NRRL 3357, a strain that causes aflatoxin contamination of food and feed.</title>
        <authorList>
            <person name="Nierman W.C."/>
            <person name="Yu J."/>
            <person name="Fedorova-Abrams N.D."/>
            <person name="Losada L."/>
            <person name="Cleveland T.E."/>
            <person name="Bhatnagar D."/>
            <person name="Bennett J.W."/>
            <person name="Dean R."/>
            <person name="Payne G.A."/>
        </authorList>
    </citation>
    <scope>NUCLEOTIDE SEQUENCE [LARGE SCALE GENOMIC DNA]</scope>
    <source>
        <strain>ATCC 200026 / FGSC A1120 / IAM 13836 / NRRL 3357 / JCM 12722 / SRRC 167</strain>
    </source>
</reference>
<reference key="2">
    <citation type="journal article" date="2013" name="Angew. Chem. Int. Ed.">
        <title>Homologous NRPS-like gene clusters mediate redundant small-molecule biosynthesis in Aspergillus flavus.</title>
        <authorList>
            <person name="Forseth R.R."/>
            <person name="Amaike S."/>
            <person name="Schwenk D."/>
            <person name="Affeldt K.J."/>
            <person name="Hoffmeister D."/>
            <person name="Schroeder F.C."/>
            <person name="Keller N.P."/>
        </authorList>
    </citation>
    <scope>IDENTIFICATION</scope>
    <scope>FUNCTION</scope>
    <scope>PATHWAY</scope>
</reference>
<proteinExistence type="inferred from homology"/>
<gene>
    <name evidence="3" type="primary">lnaE</name>
    <name type="ORF">AFLA_101690</name>
</gene>
<feature type="chain" id="PRO_0000446081" description="NADP-dependent oxidoreductase lnaE">
    <location>
        <begin position="1"/>
        <end position="371"/>
    </location>
</feature>
<feature type="binding site" evidence="1">
    <location>
        <begin position="172"/>
        <end position="175"/>
    </location>
    <ligand>
        <name>NADP(+)</name>
        <dbReference type="ChEBI" id="CHEBI:58349"/>
    </ligand>
</feature>
<feature type="binding site" evidence="1">
    <location>
        <position position="198"/>
    </location>
    <ligand>
        <name>NADP(+)</name>
        <dbReference type="ChEBI" id="CHEBI:58349"/>
    </ligand>
</feature>
<feature type="binding site" evidence="1">
    <location>
        <position position="214"/>
    </location>
    <ligand>
        <name>NADP(+)</name>
        <dbReference type="ChEBI" id="CHEBI:58349"/>
    </ligand>
</feature>
<feature type="binding site" evidence="1">
    <location>
        <position position="237"/>
    </location>
    <ligand>
        <name>NADP(+)</name>
        <dbReference type="ChEBI" id="CHEBI:58349"/>
    </ligand>
</feature>
<feature type="binding site" evidence="1">
    <location>
        <begin position="277"/>
        <end position="283"/>
    </location>
    <ligand>
        <name>NADP(+)</name>
        <dbReference type="ChEBI" id="CHEBI:58349"/>
    </ligand>
</feature>
<feature type="binding site" evidence="1">
    <location>
        <begin position="307"/>
        <end position="309"/>
    </location>
    <ligand>
        <name>NADP(+)</name>
        <dbReference type="ChEBI" id="CHEBI:58349"/>
    </ligand>
</feature>
<name>LNAE_ASPFN</name>
<accession>B8NTZ8</accession>
<organism>
    <name type="scientific">Aspergillus flavus (strain ATCC 200026 / FGSC A1120 / IAM 13836 / NRRL 3357 / JCM 12722 / SRRC 167)</name>
    <dbReference type="NCBI Taxonomy" id="332952"/>
    <lineage>
        <taxon>Eukaryota</taxon>
        <taxon>Fungi</taxon>
        <taxon>Dikarya</taxon>
        <taxon>Ascomycota</taxon>
        <taxon>Pezizomycotina</taxon>
        <taxon>Eurotiomycetes</taxon>
        <taxon>Eurotiomycetidae</taxon>
        <taxon>Eurotiales</taxon>
        <taxon>Aspergillaceae</taxon>
        <taxon>Aspergillus</taxon>
        <taxon>Aspergillus subgen. Circumdati</taxon>
    </lineage>
</organism>
<keyword id="KW-0521">NADP</keyword>
<keyword id="KW-0560">Oxidoreductase</keyword>
<sequence>MTRVTMDQDTENKVLVIKNMDSGYLVAGEQVTLEDVSYDATEPLAEDELMVQLLYATYDLFKRDLASSSADATELRGRKPVETMSIAQVIKSNNKQFQEGDMVIGRLPVQQYVLIKADDATELKLLENPCEFDDIRLFLSVLGVPGLLAFSSLYEIGRPKKGETILIAGASDEIGQLVGQMARLEGLKVFGSVESDEKLDFLITELGFDGGFNYAKESPYEALPRLVPNGIDIYYDNLSWMSRLNIGGLDTHFDLLGSRHLNAAFSSMRRYGRIMFYGTIAEQTVLDPIIGMFLHNTVLKRLTIRGFGLSDPSFGKKWGKLHMERMQQWVKEEKLKIPTFEITGMDNAAKAFVEAFYSSENTHTHTILAVT</sequence>
<comment type="function">
    <text evidence="2">NADP-dependent oxidoreductase; part of the lna gene cluster that mediates the biosynthesis of diastereomeric piperazines. Lna and lnb clusters encode sets of enzymes that produce overlapping sets of previously undescribed metabolites such as piperazinomycin-like metabolites or morpholine (PubMed:23281040). The lna and lnb biosynthetic pathways appear to be part of a signaling network that controls the formation of sclerotia, a resilient overwintering structure (PubMed:23281040). One primary function of the non-canonical nonribosomal peptide synthetases lnaA and lnbA consists in the reduction of L-tyrosine (PubMed:23281040). The presence in the clusters of tailoring enzymes such as the oxidoreductases lnaB, lnbB, lnaE or lnbE, as well as of the cytochrome P450 monooxygenases lnaC, lnaD, or lnbC, might explain formation of various diastereomeric piperazines (PubMed:23281040).</text>
</comment>
<comment type="pathway">
    <text evidence="5">Secondary metabolite biosynthesis.</text>
</comment>
<comment type="similarity">
    <text evidence="4">Belongs to the NADP-dependent oxidoreductase L4BD family.</text>
</comment>
<evidence type="ECO:0000250" key="1">
    <source>
        <dbReference type="UniProtKB" id="Q9EQZ5"/>
    </source>
</evidence>
<evidence type="ECO:0000269" key="2">
    <source>
    </source>
</evidence>
<evidence type="ECO:0000303" key="3">
    <source>
    </source>
</evidence>
<evidence type="ECO:0000305" key="4"/>
<evidence type="ECO:0000305" key="5">
    <source>
    </source>
</evidence>
<dbReference type="EC" id="1.-.-.-" evidence="5"/>
<dbReference type="EMBL" id="EQ963484">
    <property type="protein sequence ID" value="EED46505.1"/>
    <property type="molecule type" value="Genomic_DNA"/>
</dbReference>
<dbReference type="RefSeq" id="XP_002384041.1">
    <property type="nucleotide sequence ID" value="XM_002384000.1"/>
</dbReference>
<dbReference type="SMR" id="B8NTZ8"/>
<dbReference type="EnsemblFungi" id="EED46505">
    <property type="protein sequence ID" value="EED46505"/>
    <property type="gene ID" value="AFLA_101690"/>
</dbReference>
<dbReference type="VEuPathDB" id="FungiDB:AFLA_010419"/>
<dbReference type="eggNOG" id="KOG1196">
    <property type="taxonomic scope" value="Eukaryota"/>
</dbReference>
<dbReference type="HOGENOM" id="CLU_026673_29_1_1"/>
<dbReference type="OMA" id="GKLHMER"/>
<dbReference type="GO" id="GO:0016628">
    <property type="term" value="F:oxidoreductase activity, acting on the CH-CH group of donors, NAD or NADP as acceptor"/>
    <property type="evidence" value="ECO:0007669"/>
    <property type="project" value="InterPro"/>
</dbReference>
<dbReference type="CDD" id="cd05288">
    <property type="entry name" value="PGDH"/>
    <property type="match status" value="1"/>
</dbReference>
<dbReference type="Gene3D" id="3.90.180.10">
    <property type="entry name" value="Medium-chain alcohol dehydrogenases, catalytic domain"/>
    <property type="match status" value="2"/>
</dbReference>
<dbReference type="Gene3D" id="3.40.50.720">
    <property type="entry name" value="NAD(P)-binding Rossmann-like Domain"/>
    <property type="match status" value="2"/>
</dbReference>
<dbReference type="InterPro" id="IPR013149">
    <property type="entry name" value="ADH-like_C"/>
</dbReference>
<dbReference type="InterPro" id="IPR041694">
    <property type="entry name" value="ADH_N_2"/>
</dbReference>
<dbReference type="InterPro" id="IPR011032">
    <property type="entry name" value="GroES-like_sf"/>
</dbReference>
<dbReference type="InterPro" id="IPR045010">
    <property type="entry name" value="MDR_fam"/>
</dbReference>
<dbReference type="InterPro" id="IPR036291">
    <property type="entry name" value="NAD(P)-bd_dom_sf"/>
</dbReference>
<dbReference type="PANTHER" id="PTHR43205">
    <property type="entry name" value="PROSTAGLANDIN REDUCTASE"/>
    <property type="match status" value="1"/>
</dbReference>
<dbReference type="PANTHER" id="PTHR43205:SF7">
    <property type="entry name" value="PROSTAGLANDIN REDUCTASE 1"/>
    <property type="match status" value="1"/>
</dbReference>
<dbReference type="Pfam" id="PF16884">
    <property type="entry name" value="ADH_N_2"/>
    <property type="match status" value="1"/>
</dbReference>
<dbReference type="Pfam" id="PF00107">
    <property type="entry name" value="ADH_zinc_N"/>
    <property type="match status" value="1"/>
</dbReference>
<dbReference type="SUPFAM" id="SSF50129">
    <property type="entry name" value="GroES-like"/>
    <property type="match status" value="1"/>
</dbReference>
<dbReference type="SUPFAM" id="SSF51735">
    <property type="entry name" value="NAD(P)-binding Rossmann-fold domains"/>
    <property type="match status" value="1"/>
</dbReference>